<feature type="chain" id="PRO_0000208040" description="TBC1 domain family member 14">
    <location>
        <begin position="1"/>
        <end position="693"/>
    </location>
</feature>
<feature type="domain" description="Rab-GAP TBC" evidence="1">
    <location>
        <begin position="401"/>
        <end position="611"/>
    </location>
</feature>
<feature type="region of interest" description="Disordered" evidence="2">
    <location>
        <begin position="108"/>
        <end position="130"/>
    </location>
</feature>
<feature type="region of interest" description="Disordered" evidence="2">
    <location>
        <begin position="271"/>
        <end position="304"/>
    </location>
</feature>
<feature type="compositionally biased region" description="Basic and acidic residues" evidence="2">
    <location>
        <begin position="271"/>
        <end position="288"/>
    </location>
</feature>
<feature type="modified residue" description="Phosphoserine" evidence="8">
    <location>
        <position position="91"/>
    </location>
</feature>
<feature type="modified residue" description="Phosphoserine" evidence="9">
    <location>
        <position position="295"/>
    </location>
</feature>
<feature type="splice variant" id="VSP_041460" description="In isoform 2." evidence="7">
    <location>
        <begin position="1"/>
        <end position="280"/>
    </location>
</feature>
<feature type="splice variant" id="VSP_041461" description="In isoform 2." evidence="7">
    <original>K</original>
    <variation>M</variation>
    <location>
        <position position="281"/>
    </location>
</feature>
<feature type="sequence variant" id="VAR_067442" description="In dbSNP:rs34860182." evidence="3 4">
    <original>L</original>
    <variation>V</variation>
    <location>
        <position position="41"/>
    </location>
</feature>
<feature type="sequence variant" id="VAR_059856" description="In dbSNP:rs11731231.">
    <original>E</original>
    <variation>Q</variation>
    <location>
        <position position="446"/>
    </location>
</feature>
<feature type="mutagenesis site" description="Loss of inhibition of autophagosome formation; when associated with A-508." evidence="5">
    <original>R</original>
    <variation>A</variation>
    <location>
        <position position="472"/>
    </location>
</feature>
<feature type="mutagenesis site" description="Loss of inhibition of autophagosome formation; when associated with A-472." evidence="5">
    <original>Q</original>
    <variation>A</variation>
    <location>
        <position position="508"/>
    </location>
</feature>
<feature type="helix" evidence="10">
    <location>
        <begin position="373"/>
        <end position="379"/>
    </location>
</feature>
<feature type="helix" evidence="10">
    <location>
        <begin position="382"/>
        <end position="384"/>
    </location>
</feature>
<feature type="helix" evidence="10">
    <location>
        <begin position="392"/>
        <end position="399"/>
    </location>
</feature>
<feature type="helix" evidence="10">
    <location>
        <begin position="404"/>
        <end position="415"/>
    </location>
</feature>
<feature type="helix" evidence="10">
    <location>
        <begin position="423"/>
        <end position="436"/>
    </location>
</feature>
<feature type="helix" evidence="10">
    <location>
        <begin position="462"/>
        <end position="471"/>
    </location>
</feature>
<feature type="helix" evidence="10">
    <location>
        <begin position="475"/>
        <end position="477"/>
    </location>
</feature>
<feature type="strand" evidence="10">
    <location>
        <begin position="479"/>
        <end position="481"/>
    </location>
</feature>
<feature type="helix" evidence="10">
    <location>
        <begin position="487"/>
        <end position="500"/>
    </location>
</feature>
<feature type="turn" evidence="10">
    <location>
        <begin position="502"/>
        <end position="504"/>
    </location>
</feature>
<feature type="helix" evidence="10">
    <location>
        <begin position="510"/>
        <end position="520"/>
    </location>
</feature>
<feature type="helix" evidence="10">
    <location>
        <begin position="523"/>
        <end position="534"/>
    </location>
</feature>
<feature type="helix" evidence="10">
    <location>
        <begin position="537"/>
        <end position="543"/>
    </location>
</feature>
<feature type="helix" evidence="10">
    <location>
        <begin position="548"/>
        <end position="564"/>
    </location>
</feature>
<feature type="helix" evidence="10">
    <location>
        <begin position="566"/>
        <end position="574"/>
    </location>
</feature>
<feature type="helix" evidence="10">
    <location>
        <begin position="579"/>
        <end position="581"/>
    </location>
</feature>
<feature type="helix" evidence="10">
    <location>
        <begin position="583"/>
        <end position="588"/>
    </location>
</feature>
<feature type="turn" evidence="10">
    <location>
        <begin position="589"/>
        <end position="594"/>
    </location>
</feature>
<feature type="helix" evidence="10">
    <location>
        <begin position="597"/>
        <end position="610"/>
    </location>
</feature>
<feature type="helix" evidence="10">
    <location>
        <begin position="612"/>
        <end position="625"/>
    </location>
</feature>
<feature type="helix" evidence="10">
    <location>
        <begin position="627"/>
        <end position="631"/>
    </location>
</feature>
<feature type="helix" evidence="10">
    <location>
        <begin position="635"/>
        <end position="643"/>
    </location>
</feature>
<feature type="helix" evidence="10">
    <location>
        <begin position="651"/>
        <end position="660"/>
    </location>
</feature>
<feature type="helix" evidence="10">
    <location>
        <begin position="670"/>
        <end position="678"/>
    </location>
</feature>
<gene>
    <name type="primary">TBC1D14</name>
    <name type="synonym">KIAA1322</name>
</gene>
<evidence type="ECO:0000255" key="1">
    <source>
        <dbReference type="PROSITE-ProRule" id="PRU00163"/>
    </source>
</evidence>
<evidence type="ECO:0000256" key="2">
    <source>
        <dbReference type="SAM" id="MobiDB-lite"/>
    </source>
</evidence>
<evidence type="ECO:0000269" key="3">
    <source>
    </source>
</evidence>
<evidence type="ECO:0000269" key="4">
    <source>
    </source>
</evidence>
<evidence type="ECO:0000269" key="5">
    <source>
    </source>
</evidence>
<evidence type="ECO:0000269" key="6">
    <source>
    </source>
</evidence>
<evidence type="ECO:0000305" key="7"/>
<evidence type="ECO:0007744" key="8">
    <source>
    </source>
</evidence>
<evidence type="ECO:0007744" key="9">
    <source>
    </source>
</evidence>
<evidence type="ECO:0007829" key="10">
    <source>
        <dbReference type="PDB" id="2QQ8"/>
    </source>
</evidence>
<name>TBC14_HUMAN</name>
<protein>
    <recommendedName>
        <fullName>TBC1 domain family member 14</fullName>
    </recommendedName>
</protein>
<keyword id="KW-0002">3D-structure</keyword>
<keyword id="KW-0025">Alternative splicing</keyword>
<keyword id="KW-0072">Autophagy</keyword>
<keyword id="KW-0333">Golgi apparatus</keyword>
<keyword id="KW-0343">GTPase activation</keyword>
<keyword id="KW-0597">Phosphoprotein</keyword>
<keyword id="KW-1267">Proteomics identification</keyword>
<keyword id="KW-1185">Reference proteome</keyword>
<comment type="function">
    <text evidence="5 6">Plays a role in the regulation of starvation-induced autophagosome formation (PubMed:22613832). Together with the TRAPPIII complex, regulates a constitutive trafficking step from peripheral recycling endosomes to the early Golgi, maintaining the cycling pool of ATG9 required for initiation of autophagy.</text>
</comment>
<comment type="subunit">
    <text evidence="5 6">Interacts with ULK1 (PubMed:22613832). May interact with RAB11A and RAB11B, but does not exhibit any GTPase-activating activity toward these proteins (PubMed:22613832). Interacts with TRAPPC8 (PubMed:26711178).</text>
</comment>
<comment type="interaction">
    <interactant intactId="EBI-2797718">
        <id>Q9P2M4</id>
    </interactant>
    <interactant intactId="EBI-398874">
        <id>Q9UBU9</id>
        <label>NXF1</label>
    </interactant>
    <organismsDiffer>false</organismsDiffer>
    <experiments>3</experiments>
</comment>
<comment type="interaction">
    <interactant intactId="EBI-2797718">
        <id>Q9P2M4</id>
    </interactant>
    <interactant intactId="EBI-722234">
        <id>Q15907</id>
        <label>RAB11B</label>
    </interactant>
    <organismsDiffer>false</organismsDiffer>
    <experiments>2</experiments>
</comment>
<comment type="interaction">
    <interactant intactId="EBI-2797718">
        <id>Q9P2M4</id>
    </interactant>
    <interactant intactId="EBI-908831">
        <id>O75385</id>
        <label>ULK1</label>
    </interactant>
    <organismsDiffer>false</organismsDiffer>
    <experiments>4</experiments>
</comment>
<comment type="subcellular location">
    <subcellularLocation>
        <location evidence="5 6">Golgi apparatus</location>
        <location evidence="5 6">cis-Golgi network</location>
    </subcellularLocation>
    <subcellularLocation>
        <location evidence="5">Golgi apparatus</location>
        <location evidence="5">trans-Golgi network</location>
    </subcellularLocation>
    <text>After amino acid starvation, Golgi apparatus-associated protein levels increase compared with fed conditions. May be cycling between the Golgi apparatus and an endosomal pool, redistributing to the Golgi apparatus upon starvation.</text>
</comment>
<comment type="alternative products">
    <event type="alternative splicing"/>
    <isoform>
        <id>Q9P2M4-1</id>
        <name>1</name>
        <sequence type="displayed"/>
    </isoform>
    <isoform>
        <id>Q9P2M4-2</id>
        <name>2</name>
        <sequence type="described" ref="VSP_041460 VSP_041461"/>
    </isoform>
</comment>
<comment type="sequence caution" evidence="7">
    <conflict type="erroneous initiation">
        <sequence resource="EMBL-CDS" id="AAH41167"/>
    </conflict>
    <text>Truncated N-terminus.</text>
</comment>
<comment type="sequence caution" evidence="7">
    <conflict type="erroneous initiation">
        <sequence resource="EMBL-CDS" id="BAA92560"/>
    </conflict>
    <text>Extended N-terminus.</text>
</comment>
<dbReference type="EMBL" id="AB449900">
    <property type="protein sequence ID" value="BAH16643.1"/>
    <property type="molecule type" value="mRNA"/>
</dbReference>
<dbReference type="EMBL" id="AB037743">
    <property type="protein sequence ID" value="BAA92560.1"/>
    <property type="status" value="ALT_INIT"/>
    <property type="molecule type" value="mRNA"/>
</dbReference>
<dbReference type="EMBL" id="AC092463">
    <property type="status" value="NOT_ANNOTATED_CDS"/>
    <property type="molecule type" value="Genomic_DNA"/>
</dbReference>
<dbReference type="EMBL" id="AC097382">
    <property type="status" value="NOT_ANNOTATED_CDS"/>
    <property type="molecule type" value="Genomic_DNA"/>
</dbReference>
<dbReference type="EMBL" id="AC106045">
    <property type="status" value="NOT_ANNOTATED_CDS"/>
    <property type="molecule type" value="Genomic_DNA"/>
</dbReference>
<dbReference type="EMBL" id="CH471131">
    <property type="protein sequence ID" value="EAW82375.1"/>
    <property type="molecule type" value="Genomic_DNA"/>
</dbReference>
<dbReference type="EMBL" id="CH471131">
    <property type="protein sequence ID" value="EAW82376.1"/>
    <property type="molecule type" value="Genomic_DNA"/>
</dbReference>
<dbReference type="EMBL" id="CH471131">
    <property type="protein sequence ID" value="EAW82377.1"/>
    <property type="molecule type" value="Genomic_DNA"/>
</dbReference>
<dbReference type="EMBL" id="BC041167">
    <property type="protein sequence ID" value="AAH41167.1"/>
    <property type="status" value="ALT_INIT"/>
    <property type="molecule type" value="mRNA"/>
</dbReference>
<dbReference type="EMBL" id="AL833868">
    <property type="protein sequence ID" value="CAD38726.1"/>
    <property type="molecule type" value="mRNA"/>
</dbReference>
<dbReference type="CCDS" id="CCDS3394.2">
    <molecule id="Q9P2M4-1"/>
</dbReference>
<dbReference type="CCDS" id="CCDS47006.1">
    <molecule id="Q9P2M4-2"/>
</dbReference>
<dbReference type="RefSeq" id="NP_001106832.1">
    <molecule id="Q9P2M4-1"/>
    <property type="nucleotide sequence ID" value="NM_001113361.2"/>
</dbReference>
<dbReference type="RefSeq" id="NP_001106834.1">
    <molecule id="Q9P2M4-2"/>
    <property type="nucleotide sequence ID" value="NM_001113363.2"/>
</dbReference>
<dbReference type="RefSeq" id="NP_001273734.1">
    <property type="nucleotide sequence ID" value="NM_001286805.1"/>
</dbReference>
<dbReference type="RefSeq" id="NP_001317567.1">
    <property type="nucleotide sequence ID" value="NM_001330638.1"/>
</dbReference>
<dbReference type="RefSeq" id="NP_065824.2">
    <molecule id="Q9P2M4-1"/>
    <property type="nucleotide sequence ID" value="NM_020773.3"/>
</dbReference>
<dbReference type="RefSeq" id="XP_006713958.1">
    <molecule id="Q9P2M4-1"/>
    <property type="nucleotide sequence ID" value="XM_006713895.4"/>
</dbReference>
<dbReference type="RefSeq" id="XP_047271956.1">
    <molecule id="Q9P2M4-1"/>
    <property type="nucleotide sequence ID" value="XM_047416000.1"/>
</dbReference>
<dbReference type="RefSeq" id="XP_054206548.1">
    <molecule id="Q9P2M4-1"/>
    <property type="nucleotide sequence ID" value="XM_054350573.1"/>
</dbReference>
<dbReference type="RefSeq" id="XP_054206549.1">
    <molecule id="Q9P2M4-1"/>
    <property type="nucleotide sequence ID" value="XM_054350574.1"/>
</dbReference>
<dbReference type="PDB" id="2QQ8">
    <property type="method" value="X-ray"/>
    <property type="resolution" value="2.00 A"/>
    <property type="chains" value="A=372-687"/>
</dbReference>
<dbReference type="PDBsum" id="2QQ8"/>
<dbReference type="SMR" id="Q9P2M4"/>
<dbReference type="BioGRID" id="121592">
    <property type="interactions" value="38"/>
</dbReference>
<dbReference type="FunCoup" id="Q9P2M4">
    <property type="interactions" value="1633"/>
</dbReference>
<dbReference type="IntAct" id="Q9P2M4">
    <property type="interactions" value="46"/>
</dbReference>
<dbReference type="MINT" id="Q9P2M4"/>
<dbReference type="STRING" id="9606.ENSP00000386921"/>
<dbReference type="GlyGen" id="Q9P2M4">
    <property type="glycosylation" value="1 site, 1 O-linked glycan (1 site)"/>
</dbReference>
<dbReference type="iPTMnet" id="Q9P2M4"/>
<dbReference type="PhosphoSitePlus" id="Q9P2M4"/>
<dbReference type="BioMuta" id="TBC1D14"/>
<dbReference type="DMDM" id="172044690"/>
<dbReference type="jPOST" id="Q9P2M4"/>
<dbReference type="MassIVE" id="Q9P2M4"/>
<dbReference type="PaxDb" id="9606-ENSP00000386921"/>
<dbReference type="PeptideAtlas" id="Q9P2M4"/>
<dbReference type="ProteomicsDB" id="83847">
    <molecule id="Q9P2M4-1"/>
</dbReference>
<dbReference type="ProteomicsDB" id="83848">
    <molecule id="Q9P2M4-2"/>
</dbReference>
<dbReference type="Pumba" id="Q9P2M4"/>
<dbReference type="Antibodypedia" id="43347">
    <property type="antibodies" value="99 antibodies from 15 providers"/>
</dbReference>
<dbReference type="DNASU" id="57533"/>
<dbReference type="Ensembl" id="ENST00000409757.9">
    <molecule id="Q9P2M4-1"/>
    <property type="protein sequence ID" value="ENSP00000386921.4"/>
    <property type="gene ID" value="ENSG00000132405.19"/>
</dbReference>
<dbReference type="Ensembl" id="ENST00000448507.5">
    <molecule id="Q9P2M4-1"/>
    <property type="protein sequence ID" value="ENSP00000404041.1"/>
    <property type="gene ID" value="ENSG00000132405.19"/>
</dbReference>
<dbReference type="Ensembl" id="ENST00000451522.6">
    <molecule id="Q9P2M4-2"/>
    <property type="protein sequence ID" value="ENSP00000388886.2"/>
    <property type="gene ID" value="ENSG00000132405.19"/>
</dbReference>
<dbReference type="GeneID" id="57533"/>
<dbReference type="KEGG" id="hsa:57533"/>
<dbReference type="MANE-Select" id="ENST00000409757.9">
    <property type="protein sequence ID" value="ENSP00000386921.4"/>
    <property type="RefSeq nucleotide sequence ID" value="NM_020773.3"/>
    <property type="RefSeq protein sequence ID" value="NP_065824.2"/>
</dbReference>
<dbReference type="UCSC" id="uc003gjs.5">
    <molecule id="Q9P2M4-1"/>
    <property type="organism name" value="human"/>
</dbReference>
<dbReference type="AGR" id="HGNC:29246"/>
<dbReference type="CTD" id="57533"/>
<dbReference type="DisGeNET" id="57533"/>
<dbReference type="GeneCards" id="TBC1D14"/>
<dbReference type="HGNC" id="HGNC:29246">
    <property type="gene designation" value="TBC1D14"/>
</dbReference>
<dbReference type="HPA" id="ENSG00000132405">
    <property type="expression patterns" value="Low tissue specificity"/>
</dbReference>
<dbReference type="MIM" id="614855">
    <property type="type" value="gene"/>
</dbReference>
<dbReference type="neXtProt" id="NX_Q9P2M4"/>
<dbReference type="OpenTargets" id="ENSG00000132405"/>
<dbReference type="PharmGKB" id="PA128394697"/>
<dbReference type="VEuPathDB" id="HostDB:ENSG00000132405"/>
<dbReference type="eggNOG" id="KOG2223">
    <property type="taxonomic scope" value="Eukaryota"/>
</dbReference>
<dbReference type="GeneTree" id="ENSGT00940000157250"/>
<dbReference type="HOGENOM" id="CLU_015133_1_1_1"/>
<dbReference type="InParanoid" id="Q9P2M4"/>
<dbReference type="OMA" id="NTEREHR"/>
<dbReference type="OrthoDB" id="294251at2759"/>
<dbReference type="PAN-GO" id="Q9P2M4">
    <property type="GO annotations" value="5 GO annotations based on evolutionary models"/>
</dbReference>
<dbReference type="PhylomeDB" id="Q9P2M4"/>
<dbReference type="TreeFam" id="TF313318"/>
<dbReference type="PathwayCommons" id="Q9P2M4"/>
<dbReference type="Reactome" id="R-HSA-8854214">
    <property type="pathway name" value="TBC/RABGAPs"/>
</dbReference>
<dbReference type="SignaLink" id="Q9P2M4"/>
<dbReference type="BioGRID-ORCS" id="57533">
    <property type="hits" value="15 hits in 1157 CRISPR screens"/>
</dbReference>
<dbReference type="ChiTaRS" id="TBC1D14">
    <property type="organism name" value="human"/>
</dbReference>
<dbReference type="EvolutionaryTrace" id="Q9P2M4"/>
<dbReference type="GenomeRNAi" id="57533"/>
<dbReference type="Pharos" id="Q9P2M4">
    <property type="development level" value="Tbio"/>
</dbReference>
<dbReference type="PRO" id="PR:Q9P2M4"/>
<dbReference type="Proteomes" id="UP000005640">
    <property type="component" value="Chromosome 4"/>
</dbReference>
<dbReference type="RNAct" id="Q9P2M4">
    <property type="molecule type" value="protein"/>
</dbReference>
<dbReference type="Bgee" id="ENSG00000132405">
    <property type="expression patterns" value="Expressed in secondary oocyte and 187 other cell types or tissues"/>
</dbReference>
<dbReference type="ExpressionAtlas" id="Q9P2M4">
    <property type="expression patterns" value="baseline and differential"/>
</dbReference>
<dbReference type="GO" id="GO:0005776">
    <property type="term" value="C:autophagosome"/>
    <property type="evidence" value="ECO:0000314"/>
    <property type="project" value="BHF-UCL"/>
</dbReference>
<dbReference type="GO" id="GO:0005829">
    <property type="term" value="C:cytosol"/>
    <property type="evidence" value="ECO:0007669"/>
    <property type="project" value="GOC"/>
</dbReference>
<dbReference type="GO" id="GO:0005794">
    <property type="term" value="C:Golgi apparatus"/>
    <property type="evidence" value="ECO:0000314"/>
    <property type="project" value="HPA"/>
</dbReference>
<dbReference type="GO" id="GO:0043231">
    <property type="term" value="C:intracellular membrane-bounded organelle"/>
    <property type="evidence" value="ECO:0000314"/>
    <property type="project" value="HPA"/>
</dbReference>
<dbReference type="GO" id="GO:0005654">
    <property type="term" value="C:nucleoplasm"/>
    <property type="evidence" value="ECO:0000314"/>
    <property type="project" value="HPA"/>
</dbReference>
<dbReference type="GO" id="GO:0055037">
    <property type="term" value="C:recycling endosome"/>
    <property type="evidence" value="ECO:0000314"/>
    <property type="project" value="UniProtKB"/>
</dbReference>
<dbReference type="GO" id="GO:0005096">
    <property type="term" value="F:GTPase activator activity"/>
    <property type="evidence" value="ECO:0000318"/>
    <property type="project" value="GO_Central"/>
</dbReference>
<dbReference type="GO" id="GO:0019901">
    <property type="term" value="F:protein kinase binding"/>
    <property type="evidence" value="ECO:0000353"/>
    <property type="project" value="BHF-UCL"/>
</dbReference>
<dbReference type="GO" id="GO:0006914">
    <property type="term" value="P:autophagy"/>
    <property type="evidence" value="ECO:0007669"/>
    <property type="project" value="UniProtKB-KW"/>
</dbReference>
<dbReference type="GO" id="GO:0010507">
    <property type="term" value="P:negative regulation of autophagy"/>
    <property type="evidence" value="ECO:0000315"/>
    <property type="project" value="BHF-UCL"/>
</dbReference>
<dbReference type="GO" id="GO:0071955">
    <property type="term" value="P:recycling endosome to Golgi transport"/>
    <property type="evidence" value="ECO:0000315"/>
    <property type="project" value="UniProtKB"/>
</dbReference>
<dbReference type="GO" id="GO:2000785">
    <property type="term" value="P:regulation of autophagosome assembly"/>
    <property type="evidence" value="ECO:0000315"/>
    <property type="project" value="BHF-UCL"/>
</dbReference>
<dbReference type="FunFam" id="1.10.8.270:FF:000008">
    <property type="entry name" value="Putative TBC1 domain family member 14"/>
    <property type="match status" value="1"/>
</dbReference>
<dbReference type="FunFam" id="1.10.10.750:FF:000005">
    <property type="entry name" value="TBC1 domain family member 14"/>
    <property type="match status" value="1"/>
</dbReference>
<dbReference type="FunFam" id="1.10.472.80:FF:000006">
    <property type="entry name" value="TBC1 domain family member 14"/>
    <property type="match status" value="1"/>
</dbReference>
<dbReference type="Gene3D" id="1.10.8.270">
    <property type="entry name" value="putative rabgap domain of human tbc1 domain family member 14 like domains"/>
    <property type="match status" value="1"/>
</dbReference>
<dbReference type="Gene3D" id="1.10.10.750">
    <property type="entry name" value="Ypt/Rab-GAP domain of gyp1p, domain 1"/>
    <property type="match status" value="1"/>
</dbReference>
<dbReference type="Gene3D" id="1.10.472.80">
    <property type="entry name" value="Ypt/Rab-GAP domain of gyp1p, domain 3"/>
    <property type="match status" value="1"/>
</dbReference>
<dbReference type="InterPro" id="IPR000195">
    <property type="entry name" value="Rab-GAP-TBC_dom"/>
</dbReference>
<dbReference type="InterPro" id="IPR035969">
    <property type="entry name" value="Rab-GAP_TBC_sf"/>
</dbReference>
<dbReference type="InterPro" id="IPR050302">
    <property type="entry name" value="Rab_GAP_TBC_domain"/>
</dbReference>
<dbReference type="PANTHER" id="PTHR47219">
    <property type="entry name" value="RAB GTPASE-ACTIVATING PROTEIN 1-LIKE"/>
    <property type="match status" value="1"/>
</dbReference>
<dbReference type="PANTHER" id="PTHR47219:SF21">
    <property type="entry name" value="TBC1 DOMAIN FAMILY MEMBER 14"/>
    <property type="match status" value="1"/>
</dbReference>
<dbReference type="Pfam" id="PF00566">
    <property type="entry name" value="RabGAP-TBC"/>
    <property type="match status" value="1"/>
</dbReference>
<dbReference type="SMART" id="SM00164">
    <property type="entry name" value="TBC"/>
    <property type="match status" value="1"/>
</dbReference>
<dbReference type="SUPFAM" id="SSF47923">
    <property type="entry name" value="Ypt/Rab-GAP domain of gyp1p"/>
    <property type="match status" value="2"/>
</dbReference>
<dbReference type="PROSITE" id="PS50086">
    <property type="entry name" value="TBC_RABGAP"/>
    <property type="match status" value="1"/>
</dbReference>
<reference key="1">
    <citation type="journal article" date="2009" name="Genes Cells">
        <title>Identification and characterization of a novel Tre-2/Bub2/Cdc16 (TBC) protein that possesses Rab3A-GAP activity.</title>
        <authorList>
            <person name="Ishibashi K."/>
            <person name="Kanno E."/>
            <person name="Itoh T."/>
            <person name="Fukuda M."/>
        </authorList>
    </citation>
    <scope>NUCLEOTIDE SEQUENCE [MRNA]</scope>
    <scope>VARIANT VAL-41</scope>
    <source>
        <tissue>Brain</tissue>
    </source>
</reference>
<reference key="2">
    <citation type="journal article" date="2000" name="DNA Res.">
        <title>Prediction of the coding sequences of unidentified human genes. XVI. The complete sequences of 150 new cDNA clones from brain which code for large proteins in vitro.</title>
        <authorList>
            <person name="Nagase T."/>
            <person name="Kikuno R."/>
            <person name="Ishikawa K."/>
            <person name="Hirosawa M."/>
            <person name="Ohara O."/>
        </authorList>
    </citation>
    <scope>NUCLEOTIDE SEQUENCE [LARGE SCALE MRNA] (ISOFORM 1)</scope>
    <scope>VARIANT VAL-41</scope>
    <source>
        <tissue>Brain</tissue>
    </source>
</reference>
<reference key="3">
    <citation type="journal article" date="2005" name="Nature">
        <title>Generation and annotation of the DNA sequences of human chromosomes 2 and 4.</title>
        <authorList>
            <person name="Hillier L.W."/>
            <person name="Graves T.A."/>
            <person name="Fulton R.S."/>
            <person name="Fulton L.A."/>
            <person name="Pepin K.H."/>
            <person name="Minx P."/>
            <person name="Wagner-McPherson C."/>
            <person name="Layman D."/>
            <person name="Wylie K."/>
            <person name="Sekhon M."/>
            <person name="Becker M.C."/>
            <person name="Fewell G.A."/>
            <person name="Delehaunty K.D."/>
            <person name="Miner T.L."/>
            <person name="Nash W.E."/>
            <person name="Kremitzki C."/>
            <person name="Oddy L."/>
            <person name="Du H."/>
            <person name="Sun H."/>
            <person name="Bradshaw-Cordum H."/>
            <person name="Ali J."/>
            <person name="Carter J."/>
            <person name="Cordes M."/>
            <person name="Harris A."/>
            <person name="Isak A."/>
            <person name="van Brunt A."/>
            <person name="Nguyen C."/>
            <person name="Du F."/>
            <person name="Courtney L."/>
            <person name="Kalicki J."/>
            <person name="Ozersky P."/>
            <person name="Abbott S."/>
            <person name="Armstrong J."/>
            <person name="Belter E.A."/>
            <person name="Caruso L."/>
            <person name="Cedroni M."/>
            <person name="Cotton M."/>
            <person name="Davidson T."/>
            <person name="Desai A."/>
            <person name="Elliott G."/>
            <person name="Erb T."/>
            <person name="Fronick C."/>
            <person name="Gaige T."/>
            <person name="Haakenson W."/>
            <person name="Haglund K."/>
            <person name="Holmes A."/>
            <person name="Harkins R."/>
            <person name="Kim K."/>
            <person name="Kruchowski S.S."/>
            <person name="Strong C.M."/>
            <person name="Grewal N."/>
            <person name="Goyea E."/>
            <person name="Hou S."/>
            <person name="Levy A."/>
            <person name="Martinka S."/>
            <person name="Mead K."/>
            <person name="McLellan M.D."/>
            <person name="Meyer R."/>
            <person name="Randall-Maher J."/>
            <person name="Tomlinson C."/>
            <person name="Dauphin-Kohlberg S."/>
            <person name="Kozlowicz-Reilly A."/>
            <person name="Shah N."/>
            <person name="Swearengen-Shahid S."/>
            <person name="Snider J."/>
            <person name="Strong J.T."/>
            <person name="Thompson J."/>
            <person name="Yoakum M."/>
            <person name="Leonard S."/>
            <person name="Pearman C."/>
            <person name="Trani L."/>
            <person name="Radionenko M."/>
            <person name="Waligorski J.E."/>
            <person name="Wang C."/>
            <person name="Rock S.M."/>
            <person name="Tin-Wollam A.-M."/>
            <person name="Maupin R."/>
            <person name="Latreille P."/>
            <person name="Wendl M.C."/>
            <person name="Yang S.-P."/>
            <person name="Pohl C."/>
            <person name="Wallis J.W."/>
            <person name="Spieth J."/>
            <person name="Bieri T.A."/>
            <person name="Berkowicz N."/>
            <person name="Nelson J.O."/>
            <person name="Osborne J."/>
            <person name="Ding L."/>
            <person name="Meyer R."/>
            <person name="Sabo A."/>
            <person name="Shotland Y."/>
            <person name="Sinha P."/>
            <person name="Wohldmann P.E."/>
            <person name="Cook L.L."/>
            <person name="Hickenbotham M.T."/>
            <person name="Eldred J."/>
            <person name="Williams D."/>
            <person name="Jones T.A."/>
            <person name="She X."/>
            <person name="Ciccarelli F.D."/>
            <person name="Izaurralde E."/>
            <person name="Taylor J."/>
            <person name="Schmutz J."/>
            <person name="Myers R.M."/>
            <person name="Cox D.R."/>
            <person name="Huang X."/>
            <person name="McPherson J.D."/>
            <person name="Mardis E.R."/>
            <person name="Clifton S.W."/>
            <person name="Warren W.C."/>
            <person name="Chinwalla A.T."/>
            <person name="Eddy S.R."/>
            <person name="Marra M.A."/>
            <person name="Ovcharenko I."/>
            <person name="Furey T.S."/>
            <person name="Miller W."/>
            <person name="Eichler E.E."/>
            <person name="Bork P."/>
            <person name="Suyama M."/>
            <person name="Torrents D."/>
            <person name="Waterston R.H."/>
            <person name="Wilson R.K."/>
        </authorList>
    </citation>
    <scope>NUCLEOTIDE SEQUENCE [LARGE SCALE GENOMIC DNA]</scope>
</reference>
<reference key="4">
    <citation type="submission" date="2005-09" db="EMBL/GenBank/DDBJ databases">
        <authorList>
            <person name="Mural R.J."/>
            <person name="Istrail S."/>
            <person name="Sutton G.G."/>
            <person name="Florea L."/>
            <person name="Halpern A.L."/>
            <person name="Mobarry C.M."/>
            <person name="Lippert R."/>
            <person name="Walenz B."/>
            <person name="Shatkay H."/>
            <person name="Dew I."/>
            <person name="Miller J.R."/>
            <person name="Flanigan M.J."/>
            <person name="Edwards N.J."/>
            <person name="Bolanos R."/>
            <person name="Fasulo D."/>
            <person name="Halldorsson B.V."/>
            <person name="Hannenhalli S."/>
            <person name="Turner R."/>
            <person name="Yooseph S."/>
            <person name="Lu F."/>
            <person name="Nusskern D.R."/>
            <person name="Shue B.C."/>
            <person name="Zheng X.H."/>
            <person name="Zhong F."/>
            <person name="Delcher A.L."/>
            <person name="Huson D.H."/>
            <person name="Kravitz S.A."/>
            <person name="Mouchard L."/>
            <person name="Reinert K."/>
            <person name="Remington K.A."/>
            <person name="Clark A.G."/>
            <person name="Waterman M.S."/>
            <person name="Eichler E.E."/>
            <person name="Adams M.D."/>
            <person name="Hunkapiller M.W."/>
            <person name="Myers E.W."/>
            <person name="Venter J.C."/>
        </authorList>
    </citation>
    <scope>NUCLEOTIDE SEQUENCE [LARGE SCALE GENOMIC DNA]</scope>
</reference>
<reference key="5">
    <citation type="journal article" date="2004" name="Genome Res.">
        <title>The status, quality, and expansion of the NIH full-length cDNA project: the Mammalian Gene Collection (MGC).</title>
        <authorList>
            <consortium name="The MGC Project Team"/>
        </authorList>
    </citation>
    <scope>NUCLEOTIDE SEQUENCE [LARGE SCALE MRNA] (ISOFORM 1)</scope>
    <source>
        <tissue>Testis</tissue>
    </source>
</reference>
<reference key="6">
    <citation type="journal article" date="2007" name="BMC Genomics">
        <title>The full-ORF clone resource of the German cDNA consortium.</title>
        <authorList>
            <person name="Bechtel S."/>
            <person name="Rosenfelder H."/>
            <person name="Duda A."/>
            <person name="Schmidt C.P."/>
            <person name="Ernst U."/>
            <person name="Wellenreuther R."/>
            <person name="Mehrle A."/>
            <person name="Schuster C."/>
            <person name="Bahr A."/>
            <person name="Bloecker H."/>
            <person name="Heubner D."/>
            <person name="Hoerlein A."/>
            <person name="Michel G."/>
            <person name="Wedler H."/>
            <person name="Koehrer K."/>
            <person name="Ottenwaelder B."/>
            <person name="Poustka A."/>
            <person name="Wiemann S."/>
            <person name="Schupp I."/>
        </authorList>
    </citation>
    <scope>NUCLEOTIDE SEQUENCE [LARGE SCALE MRNA] OF 313-693</scope>
    <source>
        <tissue>Testis</tissue>
    </source>
</reference>
<reference key="7">
    <citation type="journal article" date="2012" name="J. Cell Biol.">
        <title>TBC1D14 regulates autophagosome formation via Rab11- and ULK1-positive recycling endosomes.</title>
        <authorList>
            <person name="Longatti A."/>
            <person name="Lamb C.A."/>
            <person name="Razi M."/>
            <person name="Yoshimura S."/>
            <person name="Barr F.A."/>
            <person name="Tooze S.A."/>
        </authorList>
    </citation>
    <scope>FUNCTION</scope>
    <scope>INTERACTION WITH RAB11A; RAB11 AND ULK1</scope>
    <scope>SUBCELLULAR LOCATION</scope>
    <scope>MUTAGENESIS OF ARG-472 AND GLN-508</scope>
</reference>
<reference key="8">
    <citation type="journal article" date="2013" name="J. Proteome Res.">
        <title>Toward a comprehensive characterization of a human cancer cell phosphoproteome.</title>
        <authorList>
            <person name="Zhou H."/>
            <person name="Di Palma S."/>
            <person name="Preisinger C."/>
            <person name="Peng M."/>
            <person name="Polat A.N."/>
            <person name="Heck A.J."/>
            <person name="Mohammed S."/>
        </authorList>
    </citation>
    <scope>PHOSPHORYLATION [LARGE SCALE ANALYSIS] AT SER-91</scope>
    <scope>IDENTIFICATION BY MASS SPECTROMETRY [LARGE SCALE ANALYSIS]</scope>
    <source>
        <tissue>Cervix carcinoma</tissue>
        <tissue>Erythroleukemia</tissue>
    </source>
</reference>
<reference key="9">
    <citation type="journal article" date="2014" name="J. Proteomics">
        <title>An enzyme assisted RP-RPLC approach for in-depth analysis of human liver phosphoproteome.</title>
        <authorList>
            <person name="Bian Y."/>
            <person name="Song C."/>
            <person name="Cheng K."/>
            <person name="Dong M."/>
            <person name="Wang F."/>
            <person name="Huang J."/>
            <person name="Sun D."/>
            <person name="Wang L."/>
            <person name="Ye M."/>
            <person name="Zou H."/>
        </authorList>
    </citation>
    <scope>PHOSPHORYLATION [LARGE SCALE ANALYSIS] AT SER-295</scope>
    <scope>IDENTIFICATION BY MASS SPECTROMETRY [LARGE SCALE ANALYSIS]</scope>
    <source>
        <tissue>Liver</tissue>
    </source>
</reference>
<reference key="10">
    <citation type="journal article" date="2016" name="EMBO J.">
        <title>TBC1D14 regulates autophagy via the TRAPP complex and ATG9 traffic.</title>
        <authorList>
            <person name="Lamb C.A."/>
            <person name="Nuehlen S."/>
            <person name="Judith D."/>
            <person name="Frith D."/>
            <person name="Snijders A.P."/>
            <person name="Behrends C."/>
            <person name="Tooze S.A."/>
        </authorList>
    </citation>
    <scope>FUNCTION</scope>
    <scope>INTERACTION WITH TRAPPC8</scope>
    <scope>SUBCELLULAR LOCATION</scope>
</reference>
<reference key="11">
    <citation type="journal article" date="2008" name="Proteins">
        <title>First crystallographic models of human TBC domains in the context of a family-wide structural analysis.</title>
        <authorList>
            <person name="Tempel W."/>
            <person name="Tong Y."/>
            <person name="Dimov S."/>
            <person name="Bochkarev A."/>
            <person name="Park H."/>
        </authorList>
    </citation>
    <scope>X-RAY CRYSTALLOGRAPHY (2.0 ANGSTROMS) OF 372-672</scope>
</reference>
<organism>
    <name type="scientific">Homo sapiens</name>
    <name type="common">Human</name>
    <dbReference type="NCBI Taxonomy" id="9606"/>
    <lineage>
        <taxon>Eukaryota</taxon>
        <taxon>Metazoa</taxon>
        <taxon>Chordata</taxon>
        <taxon>Craniata</taxon>
        <taxon>Vertebrata</taxon>
        <taxon>Euteleostomi</taxon>
        <taxon>Mammalia</taxon>
        <taxon>Eutheria</taxon>
        <taxon>Euarchontoglires</taxon>
        <taxon>Primates</taxon>
        <taxon>Haplorrhini</taxon>
        <taxon>Catarrhini</taxon>
        <taxon>Hominidae</taxon>
        <taxon>Homo</taxon>
    </lineage>
</organism>
<sequence length="693" mass="78137">MTDGKLSTSTNGVAFMGILDGRPGNPLQNLQHVNLKAPRLLSAPEYGPKLKLRALEDRHSLQSVDSGIPTLEIGNPEPVPCSAVHVRRKQSDSDLIPERAFQSACALPSCAPPAPSSTEREQSVRKSSTFPRTGYDSVKLYSPTSKALTRSDDVSVCSVSSLGTELSTTLSVSNEDILDLVVTSSSSAIVTLENDDDPQFTNVTLSSIKETRGLHQQDCVHEAEEGSKLKILGPFSNFFARNLLARKQSARLDKHNDLGWKLFGKAPLRENAQKDSKRIQKEYEDKAGRPSKPPSPKQNVRKNLDFEPLSTTALILEDRPANLPAKPAEEAQKHRQQYEEMVVQAKKRELKEAQRRKKQLEERCRVEESIGNAVLTWNNEILPNWETMWCSRKVRDLWWQGIPPSVRGKVWSLAIGNELNITHELFDICLARAKERWRSLSTGGSEVENEDAGFSAADREASLELIKLDISRTFPNLCIFQQGGPYHDMLHSILGAYTCYRPDVGYVQGMSFIAAVLILNLDTADAFIAFSNLLNKPCQMAFFRVDHGLMLTYFAAFEVFFEENLPKLFAHFKKNNLTPDIYLIDWIFTLYSKSLPLDLACRIWDVFCRDGEEFLFRTALGILKLFEDILTKMDFIHMAQFLTRLPEDLPAEELFASIATIQMQSRNKKWAQVLTALQKDSREMEKGSPSLRH</sequence>
<accession>Q9P2M4</accession>
<accession>B9A6L5</accession>
<accession>D3DVT4</accession>
<accession>E9PAZ6</accession>
<accession>Q8IW15</accession>
<accession>Q8NDK3</accession>
<proteinExistence type="evidence at protein level"/>